<name>COBQ_PHOLL</name>
<sequence length="512" mass="55665">MGLSLMLQGTASDVGKSVLVAGLCRIFVQDGYRCAPFKSQNMALNSGITINGEEMGRAQIFQAEAAGIEPDVRMNPVLLKPTSERKAQVVLMGKVACSMNAVEYHQYKPSLQQQICEVFHSLASEYDVIVLEGAGSPAEINLRDRDIVNMGMAEMVDAPVLLVADIDRGGVFAAIYGTLALLRPAEKARVKGVIINKFRGDISLLQPGIEQIEALTGVPVLGVMPWLDIDLEDEDGVALQTGKYDGATEKALDITVIRLPHIANFTDFNALAVQPDVRLRYVTQPSALQPSDLIILPGSKNTLGDLQWLRQNGLADALLTAHQAGVPVIGICGGYQMLGKRIIDGVESGIEQMDGLGLLDMETRFAHEKVTTRVNGNCLLALPGLLSECVEQPIRGYEIHMGSSLLGADATPFIDITERNGQSGGWCDGAVNREGSVMGSYIHGLFDSANFTRALLNALRQRKGLAAYQGEILDYTHYKQTQFDLLAKAMREHLDIERIYQCMKTHRQGSVP</sequence>
<proteinExistence type="inferred from homology"/>
<reference key="1">
    <citation type="journal article" date="2003" name="Nat. Biotechnol.">
        <title>The genome sequence of the entomopathogenic bacterium Photorhabdus luminescens.</title>
        <authorList>
            <person name="Duchaud E."/>
            <person name="Rusniok C."/>
            <person name="Frangeul L."/>
            <person name="Buchrieser C."/>
            <person name="Givaudan A."/>
            <person name="Taourit S."/>
            <person name="Bocs S."/>
            <person name="Boursaux-Eude C."/>
            <person name="Chandler M."/>
            <person name="Charles J.-F."/>
            <person name="Dassa E."/>
            <person name="Derose R."/>
            <person name="Derzelle S."/>
            <person name="Freyssinet G."/>
            <person name="Gaudriault S."/>
            <person name="Medigue C."/>
            <person name="Lanois A."/>
            <person name="Powell K."/>
            <person name="Siguier P."/>
            <person name="Vincent R."/>
            <person name="Wingate V."/>
            <person name="Zouine M."/>
            <person name="Glaser P."/>
            <person name="Boemare N."/>
            <person name="Danchin A."/>
            <person name="Kunst F."/>
        </authorList>
    </citation>
    <scope>NUCLEOTIDE SEQUENCE [LARGE SCALE GENOMIC DNA]</scope>
    <source>
        <strain>DSM 15139 / CIP 105565 / TT01</strain>
    </source>
</reference>
<gene>
    <name evidence="1" type="primary">cobQ</name>
    <name type="ordered locus">plu2987</name>
</gene>
<accession>Q7N2T7</accession>
<feature type="chain" id="PRO_0000141314" description="Cobyric acid synthase">
    <location>
        <begin position="1"/>
        <end position="512"/>
    </location>
</feature>
<feature type="domain" description="GATase cobBQ-type" evidence="1">
    <location>
        <begin position="251"/>
        <end position="451"/>
    </location>
</feature>
<feature type="active site" description="Nucleophile" evidence="1">
    <location>
        <position position="332"/>
    </location>
</feature>
<feature type="active site" evidence="1">
    <location>
        <position position="443"/>
    </location>
</feature>
<keyword id="KW-0169">Cobalamin biosynthesis</keyword>
<keyword id="KW-0315">Glutamine amidotransferase</keyword>
<keyword id="KW-1185">Reference proteome</keyword>
<dbReference type="EMBL" id="BX571869">
    <property type="protein sequence ID" value="CAE15361.1"/>
    <property type="molecule type" value="Genomic_DNA"/>
</dbReference>
<dbReference type="RefSeq" id="WP_011147206.1">
    <property type="nucleotide sequence ID" value="NC_005126.1"/>
</dbReference>
<dbReference type="STRING" id="243265.plu2987"/>
<dbReference type="GeneID" id="48849246"/>
<dbReference type="KEGG" id="plu:plu2987"/>
<dbReference type="eggNOG" id="COG1492">
    <property type="taxonomic scope" value="Bacteria"/>
</dbReference>
<dbReference type="HOGENOM" id="CLU_019250_2_2_6"/>
<dbReference type="OrthoDB" id="9808302at2"/>
<dbReference type="UniPathway" id="UPA00148"/>
<dbReference type="Proteomes" id="UP000002514">
    <property type="component" value="Chromosome"/>
</dbReference>
<dbReference type="GO" id="GO:0015420">
    <property type="term" value="F:ABC-type vitamin B12 transporter activity"/>
    <property type="evidence" value="ECO:0007669"/>
    <property type="project" value="UniProtKB-UniRule"/>
</dbReference>
<dbReference type="GO" id="GO:0003824">
    <property type="term" value="F:catalytic activity"/>
    <property type="evidence" value="ECO:0007669"/>
    <property type="project" value="InterPro"/>
</dbReference>
<dbReference type="GO" id="GO:0009236">
    <property type="term" value="P:cobalamin biosynthetic process"/>
    <property type="evidence" value="ECO:0007669"/>
    <property type="project" value="UniProtKB-UniRule"/>
</dbReference>
<dbReference type="CDD" id="cd05389">
    <property type="entry name" value="CobQ_N"/>
    <property type="match status" value="1"/>
</dbReference>
<dbReference type="CDD" id="cd01750">
    <property type="entry name" value="GATase1_CobQ"/>
    <property type="match status" value="1"/>
</dbReference>
<dbReference type="Gene3D" id="3.40.50.880">
    <property type="match status" value="1"/>
</dbReference>
<dbReference type="Gene3D" id="3.40.50.300">
    <property type="entry name" value="P-loop containing nucleotide triphosphate hydrolases"/>
    <property type="match status" value="1"/>
</dbReference>
<dbReference type="HAMAP" id="MF_00028">
    <property type="entry name" value="CobQ"/>
    <property type="match status" value="1"/>
</dbReference>
<dbReference type="InterPro" id="IPR029062">
    <property type="entry name" value="Class_I_gatase-like"/>
</dbReference>
<dbReference type="InterPro" id="IPR002586">
    <property type="entry name" value="CobQ/CobB/MinD/ParA_Nub-bd_dom"/>
</dbReference>
<dbReference type="InterPro" id="IPR033949">
    <property type="entry name" value="CobQ_GATase1"/>
</dbReference>
<dbReference type="InterPro" id="IPR047045">
    <property type="entry name" value="CobQ_N"/>
</dbReference>
<dbReference type="InterPro" id="IPR004459">
    <property type="entry name" value="CobQ_synth"/>
</dbReference>
<dbReference type="InterPro" id="IPR011698">
    <property type="entry name" value="GATase_3"/>
</dbReference>
<dbReference type="InterPro" id="IPR027417">
    <property type="entry name" value="P-loop_NTPase"/>
</dbReference>
<dbReference type="NCBIfam" id="TIGR00313">
    <property type="entry name" value="cobQ"/>
    <property type="match status" value="1"/>
</dbReference>
<dbReference type="NCBIfam" id="NF001989">
    <property type="entry name" value="PRK00784.1"/>
    <property type="match status" value="1"/>
</dbReference>
<dbReference type="PANTHER" id="PTHR21343:SF1">
    <property type="entry name" value="COBYRIC ACID SYNTHASE"/>
    <property type="match status" value="1"/>
</dbReference>
<dbReference type="PANTHER" id="PTHR21343">
    <property type="entry name" value="DETHIOBIOTIN SYNTHETASE"/>
    <property type="match status" value="1"/>
</dbReference>
<dbReference type="Pfam" id="PF01656">
    <property type="entry name" value="CbiA"/>
    <property type="match status" value="1"/>
</dbReference>
<dbReference type="Pfam" id="PF07685">
    <property type="entry name" value="GATase_3"/>
    <property type="match status" value="1"/>
</dbReference>
<dbReference type="SUPFAM" id="SSF52317">
    <property type="entry name" value="Class I glutamine amidotransferase-like"/>
    <property type="match status" value="1"/>
</dbReference>
<dbReference type="SUPFAM" id="SSF52540">
    <property type="entry name" value="P-loop containing nucleoside triphosphate hydrolases"/>
    <property type="match status" value="1"/>
</dbReference>
<dbReference type="PROSITE" id="PS51274">
    <property type="entry name" value="GATASE_COBBQ"/>
    <property type="match status" value="1"/>
</dbReference>
<protein>
    <recommendedName>
        <fullName evidence="1">Cobyric acid synthase</fullName>
    </recommendedName>
</protein>
<organism>
    <name type="scientific">Photorhabdus laumondii subsp. laumondii (strain DSM 15139 / CIP 105565 / TT01)</name>
    <name type="common">Photorhabdus luminescens subsp. laumondii</name>
    <dbReference type="NCBI Taxonomy" id="243265"/>
    <lineage>
        <taxon>Bacteria</taxon>
        <taxon>Pseudomonadati</taxon>
        <taxon>Pseudomonadota</taxon>
        <taxon>Gammaproteobacteria</taxon>
        <taxon>Enterobacterales</taxon>
        <taxon>Morganellaceae</taxon>
        <taxon>Photorhabdus</taxon>
    </lineage>
</organism>
<evidence type="ECO:0000255" key="1">
    <source>
        <dbReference type="HAMAP-Rule" id="MF_00028"/>
    </source>
</evidence>
<comment type="function">
    <text evidence="1">Catalyzes amidations at positions B, D, E, and G on adenosylcobyrinic A,C-diamide. NH(2) groups are provided by glutamine, and one molecule of ATP is hydrogenolyzed for each amidation.</text>
</comment>
<comment type="pathway">
    <text evidence="1">Cofactor biosynthesis; adenosylcobalamin biosynthesis.</text>
</comment>
<comment type="similarity">
    <text evidence="1">Belongs to the CobB/CobQ family. CobQ subfamily.</text>
</comment>